<name>SYDND_CHLCH</name>
<protein>
    <recommendedName>
        <fullName evidence="1">Aspartate--tRNA(Asp/Asn) ligase</fullName>
        <ecNumber evidence="1">6.1.1.23</ecNumber>
    </recommendedName>
    <alternativeName>
        <fullName evidence="1">Aspartyl-tRNA synthetase</fullName>
        <shortName evidence="1">AspRS</shortName>
    </alternativeName>
    <alternativeName>
        <fullName evidence="1">Non-discriminating aspartyl-tRNA synthetase</fullName>
        <shortName evidence="1">ND-AspRS</shortName>
    </alternativeName>
</protein>
<reference key="1">
    <citation type="submission" date="2005-08" db="EMBL/GenBank/DDBJ databases">
        <title>Complete sequence of Chlorobium chlorochromatii CaD3.</title>
        <authorList>
            <consortium name="US DOE Joint Genome Institute"/>
            <person name="Copeland A."/>
            <person name="Lucas S."/>
            <person name="Lapidus A."/>
            <person name="Barry K."/>
            <person name="Detter J.C."/>
            <person name="Glavina T."/>
            <person name="Hammon N."/>
            <person name="Israni S."/>
            <person name="Pitluck S."/>
            <person name="Bryant D."/>
            <person name="Schmutz J."/>
            <person name="Larimer F."/>
            <person name="Land M."/>
            <person name="Kyrpides N."/>
            <person name="Ivanova N."/>
            <person name="Richardson P."/>
        </authorList>
    </citation>
    <scope>NUCLEOTIDE SEQUENCE [LARGE SCALE GENOMIC DNA]</scope>
    <source>
        <strain>CaD3</strain>
    </source>
</reference>
<proteinExistence type="inferred from homology"/>
<accession>Q3AS30</accession>
<feature type="chain" id="PRO_0000235519" description="Aspartate--tRNA(Asp/Asn) ligase">
    <location>
        <begin position="1"/>
        <end position="605"/>
    </location>
</feature>
<feature type="region of interest" description="Aspartate" evidence="1">
    <location>
        <begin position="210"/>
        <end position="213"/>
    </location>
</feature>
<feature type="binding site" evidence="1">
    <location>
        <position position="186"/>
    </location>
    <ligand>
        <name>L-aspartate</name>
        <dbReference type="ChEBI" id="CHEBI:29991"/>
    </ligand>
</feature>
<feature type="binding site" evidence="1">
    <location>
        <begin position="232"/>
        <end position="234"/>
    </location>
    <ligand>
        <name>ATP</name>
        <dbReference type="ChEBI" id="CHEBI:30616"/>
    </ligand>
</feature>
<feature type="binding site" evidence="1">
    <location>
        <position position="232"/>
    </location>
    <ligand>
        <name>L-aspartate</name>
        <dbReference type="ChEBI" id="CHEBI:29991"/>
    </ligand>
</feature>
<feature type="binding site" evidence="1">
    <location>
        <position position="460"/>
    </location>
    <ligand>
        <name>L-aspartate</name>
        <dbReference type="ChEBI" id="CHEBI:29991"/>
    </ligand>
</feature>
<feature type="binding site" evidence="1">
    <location>
        <position position="494"/>
    </location>
    <ligand>
        <name>ATP</name>
        <dbReference type="ChEBI" id="CHEBI:30616"/>
    </ligand>
</feature>
<feature type="binding site" evidence="1">
    <location>
        <position position="501"/>
    </location>
    <ligand>
        <name>L-aspartate</name>
        <dbReference type="ChEBI" id="CHEBI:29991"/>
    </ligand>
</feature>
<feature type="binding site" evidence="1">
    <location>
        <begin position="546"/>
        <end position="549"/>
    </location>
    <ligand>
        <name>ATP</name>
        <dbReference type="ChEBI" id="CHEBI:30616"/>
    </ligand>
</feature>
<feature type="site" description="Important for tRNA non-discrimination" evidence="1">
    <location>
        <position position="43"/>
    </location>
</feature>
<dbReference type="EC" id="6.1.1.23" evidence="1"/>
<dbReference type="EMBL" id="CP000108">
    <property type="protein sequence ID" value="ABB28195.1"/>
    <property type="molecule type" value="Genomic_DNA"/>
</dbReference>
<dbReference type="SMR" id="Q3AS30"/>
<dbReference type="STRING" id="340177.Cag_0932"/>
<dbReference type="KEGG" id="cch:Cag_0932"/>
<dbReference type="eggNOG" id="COG0173">
    <property type="taxonomic scope" value="Bacteria"/>
</dbReference>
<dbReference type="HOGENOM" id="CLU_014330_3_2_10"/>
<dbReference type="OrthoDB" id="9802326at2"/>
<dbReference type="GO" id="GO:0005737">
    <property type="term" value="C:cytoplasm"/>
    <property type="evidence" value="ECO:0007669"/>
    <property type="project" value="UniProtKB-SubCell"/>
</dbReference>
<dbReference type="GO" id="GO:0004815">
    <property type="term" value="F:aspartate-tRNA ligase activity"/>
    <property type="evidence" value="ECO:0007669"/>
    <property type="project" value="UniProtKB-UniRule"/>
</dbReference>
<dbReference type="GO" id="GO:0050560">
    <property type="term" value="F:aspartate-tRNA(Asn) ligase activity"/>
    <property type="evidence" value="ECO:0007669"/>
    <property type="project" value="UniProtKB-EC"/>
</dbReference>
<dbReference type="GO" id="GO:0005524">
    <property type="term" value="F:ATP binding"/>
    <property type="evidence" value="ECO:0007669"/>
    <property type="project" value="UniProtKB-UniRule"/>
</dbReference>
<dbReference type="GO" id="GO:0003676">
    <property type="term" value="F:nucleic acid binding"/>
    <property type="evidence" value="ECO:0007669"/>
    <property type="project" value="InterPro"/>
</dbReference>
<dbReference type="GO" id="GO:0006422">
    <property type="term" value="P:aspartyl-tRNA aminoacylation"/>
    <property type="evidence" value="ECO:0007669"/>
    <property type="project" value="UniProtKB-UniRule"/>
</dbReference>
<dbReference type="CDD" id="cd00777">
    <property type="entry name" value="AspRS_core"/>
    <property type="match status" value="1"/>
</dbReference>
<dbReference type="CDD" id="cd04317">
    <property type="entry name" value="EcAspRS_like_N"/>
    <property type="match status" value="1"/>
</dbReference>
<dbReference type="Gene3D" id="3.30.930.10">
    <property type="entry name" value="Bira Bifunctional Protein, Domain 2"/>
    <property type="match status" value="1"/>
</dbReference>
<dbReference type="Gene3D" id="3.30.1360.30">
    <property type="entry name" value="GAD-like domain"/>
    <property type="match status" value="1"/>
</dbReference>
<dbReference type="Gene3D" id="2.40.50.140">
    <property type="entry name" value="Nucleic acid-binding proteins"/>
    <property type="match status" value="1"/>
</dbReference>
<dbReference type="HAMAP" id="MF_00044">
    <property type="entry name" value="Asp_tRNA_synth_type1"/>
    <property type="match status" value="1"/>
</dbReference>
<dbReference type="InterPro" id="IPR004364">
    <property type="entry name" value="Aa-tRNA-synt_II"/>
</dbReference>
<dbReference type="InterPro" id="IPR006195">
    <property type="entry name" value="aa-tRNA-synth_II"/>
</dbReference>
<dbReference type="InterPro" id="IPR045864">
    <property type="entry name" value="aa-tRNA-synth_II/BPL/LPL"/>
</dbReference>
<dbReference type="InterPro" id="IPR004524">
    <property type="entry name" value="Asp-tRNA-ligase_1"/>
</dbReference>
<dbReference type="InterPro" id="IPR047089">
    <property type="entry name" value="Asp-tRNA-ligase_1_N"/>
</dbReference>
<dbReference type="InterPro" id="IPR002312">
    <property type="entry name" value="Asp/Asn-tRNA-synth_IIb"/>
</dbReference>
<dbReference type="InterPro" id="IPR047090">
    <property type="entry name" value="AspRS_core"/>
</dbReference>
<dbReference type="InterPro" id="IPR004115">
    <property type="entry name" value="GAD-like_sf"/>
</dbReference>
<dbReference type="InterPro" id="IPR029351">
    <property type="entry name" value="GAD_dom"/>
</dbReference>
<dbReference type="InterPro" id="IPR012340">
    <property type="entry name" value="NA-bd_OB-fold"/>
</dbReference>
<dbReference type="InterPro" id="IPR004365">
    <property type="entry name" value="NA-bd_OB_tRNA"/>
</dbReference>
<dbReference type="NCBIfam" id="TIGR00459">
    <property type="entry name" value="aspS_bact"/>
    <property type="match status" value="1"/>
</dbReference>
<dbReference type="NCBIfam" id="NF001750">
    <property type="entry name" value="PRK00476.1"/>
    <property type="match status" value="1"/>
</dbReference>
<dbReference type="PANTHER" id="PTHR22594:SF5">
    <property type="entry name" value="ASPARTATE--TRNA LIGASE, MITOCHONDRIAL"/>
    <property type="match status" value="1"/>
</dbReference>
<dbReference type="PANTHER" id="PTHR22594">
    <property type="entry name" value="ASPARTYL/LYSYL-TRNA SYNTHETASE"/>
    <property type="match status" value="1"/>
</dbReference>
<dbReference type="Pfam" id="PF02938">
    <property type="entry name" value="GAD"/>
    <property type="match status" value="1"/>
</dbReference>
<dbReference type="Pfam" id="PF00152">
    <property type="entry name" value="tRNA-synt_2"/>
    <property type="match status" value="1"/>
</dbReference>
<dbReference type="Pfam" id="PF01336">
    <property type="entry name" value="tRNA_anti-codon"/>
    <property type="match status" value="1"/>
</dbReference>
<dbReference type="PRINTS" id="PR01042">
    <property type="entry name" value="TRNASYNTHASP"/>
</dbReference>
<dbReference type="SUPFAM" id="SSF55681">
    <property type="entry name" value="Class II aaRS and biotin synthetases"/>
    <property type="match status" value="1"/>
</dbReference>
<dbReference type="SUPFAM" id="SSF55261">
    <property type="entry name" value="GAD domain-like"/>
    <property type="match status" value="1"/>
</dbReference>
<dbReference type="SUPFAM" id="SSF50249">
    <property type="entry name" value="Nucleic acid-binding proteins"/>
    <property type="match status" value="1"/>
</dbReference>
<dbReference type="PROSITE" id="PS50862">
    <property type="entry name" value="AA_TRNA_LIGASE_II"/>
    <property type="match status" value="1"/>
</dbReference>
<evidence type="ECO:0000255" key="1">
    <source>
        <dbReference type="HAMAP-Rule" id="MF_00044"/>
    </source>
</evidence>
<keyword id="KW-0030">Aminoacyl-tRNA synthetase</keyword>
<keyword id="KW-0067">ATP-binding</keyword>
<keyword id="KW-0963">Cytoplasm</keyword>
<keyword id="KW-0436">Ligase</keyword>
<keyword id="KW-0547">Nucleotide-binding</keyword>
<keyword id="KW-0648">Protein biosynthesis</keyword>
<gene>
    <name evidence="1" type="primary">aspS</name>
    <name type="ordered locus">Cag_0932</name>
</gene>
<sequence>MSNPVEQQVVCNRFRSHSCGLLNATFEQQHVRLAGWVHRKRDHGGLIFIDLRDHTGICQLVIQPEQQALFAEAEHLHNESVISVEGTVILRAENAINPRLSSGEIEVVISCMSIESNAHPLPFSVADELPTSEELRLKYRFLDLRREKLHENIIFRSRLTAAVRRYLEEKNFTEIQTPILTSSSPEGARDFLVPSRLHPGKFYALPQAPQQFKQLLMVAGFPRYFQIAPCFRDEDARADRSPGEFYQLDMEMAFIEQENLFEILEGMLEHITSTMSKKRITQVPFPRISYRDVMNRFGTDKPDLRIPLEIQDVTSLFVDSGFKVFAKNTVPGCCVKALVVKGRGNESRLFYDKAEKRAKELGSAGLAYIQFKDEGAKGPLVKFLSEDDMNALKQHLNLEQGDVVFFGAGKWEVTCKIMGGMRNYFADLFTLDKDELSFCWIVDFPMYEYNEEAKKIDFSHNPFSMPQGEMEALETKDALDILAYQYDIVCNGIELSSGAIRNHKPEIMYKAFAIAGYSREEVDQRFGHMIEAFKLGAPPHGGIAPGLDRLVMILCDEQNIREVIAFPMNQQAQDLMMSAPSEVTLAQLRELHLKVELPKKEEKKG</sequence>
<organism>
    <name type="scientific">Chlorobium chlorochromatii (strain CaD3)</name>
    <dbReference type="NCBI Taxonomy" id="340177"/>
    <lineage>
        <taxon>Bacteria</taxon>
        <taxon>Pseudomonadati</taxon>
        <taxon>Chlorobiota</taxon>
        <taxon>Chlorobiia</taxon>
        <taxon>Chlorobiales</taxon>
        <taxon>Chlorobiaceae</taxon>
        <taxon>Chlorobium/Pelodictyon group</taxon>
        <taxon>Chlorobium</taxon>
    </lineage>
</organism>
<comment type="function">
    <text evidence="1">Aspartyl-tRNA synthetase with relaxed tRNA specificity since it is able to aspartylate not only its cognate tRNA(Asp) but also tRNA(Asn). Reaction proceeds in two steps: L-aspartate is first activated by ATP to form Asp-AMP and then transferred to the acceptor end of tRNA(Asp/Asn).</text>
</comment>
<comment type="catalytic activity">
    <reaction evidence="1">
        <text>tRNA(Asx) + L-aspartate + ATP = L-aspartyl-tRNA(Asx) + AMP + diphosphate</text>
        <dbReference type="Rhea" id="RHEA:18349"/>
        <dbReference type="Rhea" id="RHEA-COMP:9710"/>
        <dbReference type="Rhea" id="RHEA-COMP:9711"/>
        <dbReference type="ChEBI" id="CHEBI:29991"/>
        <dbReference type="ChEBI" id="CHEBI:30616"/>
        <dbReference type="ChEBI" id="CHEBI:33019"/>
        <dbReference type="ChEBI" id="CHEBI:78442"/>
        <dbReference type="ChEBI" id="CHEBI:78516"/>
        <dbReference type="ChEBI" id="CHEBI:456215"/>
        <dbReference type="EC" id="6.1.1.23"/>
    </reaction>
</comment>
<comment type="subunit">
    <text evidence="1">Homodimer.</text>
</comment>
<comment type="subcellular location">
    <subcellularLocation>
        <location evidence="1">Cytoplasm</location>
    </subcellularLocation>
</comment>
<comment type="similarity">
    <text evidence="1">Belongs to the class-II aminoacyl-tRNA synthetase family. Type 1 subfamily.</text>
</comment>